<protein>
    <recommendedName>
        <fullName evidence="1">UDP-N-acetylglucosamine 1-carboxyvinyltransferase</fullName>
        <ecNumber evidence="1">2.5.1.7</ecNumber>
    </recommendedName>
    <alternativeName>
        <fullName evidence="1">Enoylpyruvate transferase</fullName>
    </alternativeName>
    <alternativeName>
        <fullName evidence="1">UDP-N-acetylglucosamine enolpyruvyl transferase</fullName>
        <shortName evidence="1">EPT</shortName>
    </alternativeName>
</protein>
<organism>
    <name type="scientific">Koribacter versatilis (strain Ellin345)</name>
    <dbReference type="NCBI Taxonomy" id="204669"/>
    <lineage>
        <taxon>Bacteria</taxon>
        <taxon>Pseudomonadati</taxon>
        <taxon>Acidobacteriota</taxon>
        <taxon>Terriglobia</taxon>
        <taxon>Terriglobales</taxon>
        <taxon>Candidatus Korobacteraceae</taxon>
        <taxon>Candidatus Korobacter</taxon>
    </lineage>
</organism>
<gene>
    <name evidence="1" type="primary">murA</name>
    <name type="ordered locus">Acid345_2108</name>
</gene>
<name>MURA_KORVE</name>
<reference key="1">
    <citation type="journal article" date="2009" name="Appl. Environ. Microbiol.">
        <title>Three genomes from the phylum Acidobacteria provide insight into the lifestyles of these microorganisms in soils.</title>
        <authorList>
            <person name="Ward N.L."/>
            <person name="Challacombe J.F."/>
            <person name="Janssen P.H."/>
            <person name="Henrissat B."/>
            <person name="Coutinho P.M."/>
            <person name="Wu M."/>
            <person name="Xie G."/>
            <person name="Haft D.H."/>
            <person name="Sait M."/>
            <person name="Badger J."/>
            <person name="Barabote R.D."/>
            <person name="Bradley B."/>
            <person name="Brettin T.S."/>
            <person name="Brinkac L.M."/>
            <person name="Bruce D."/>
            <person name="Creasy T."/>
            <person name="Daugherty S.C."/>
            <person name="Davidsen T.M."/>
            <person name="DeBoy R.T."/>
            <person name="Detter J.C."/>
            <person name="Dodson R.J."/>
            <person name="Durkin A.S."/>
            <person name="Ganapathy A."/>
            <person name="Gwinn-Giglio M."/>
            <person name="Han C.S."/>
            <person name="Khouri H."/>
            <person name="Kiss H."/>
            <person name="Kothari S.P."/>
            <person name="Madupu R."/>
            <person name="Nelson K.E."/>
            <person name="Nelson W.C."/>
            <person name="Paulsen I."/>
            <person name="Penn K."/>
            <person name="Ren Q."/>
            <person name="Rosovitz M.J."/>
            <person name="Selengut J.D."/>
            <person name="Shrivastava S."/>
            <person name="Sullivan S.A."/>
            <person name="Tapia R."/>
            <person name="Thompson L.S."/>
            <person name="Watkins K.L."/>
            <person name="Yang Q."/>
            <person name="Yu C."/>
            <person name="Zafar N."/>
            <person name="Zhou L."/>
            <person name="Kuske C.R."/>
        </authorList>
    </citation>
    <scope>NUCLEOTIDE SEQUENCE [LARGE SCALE GENOMIC DNA]</scope>
    <source>
        <strain>Ellin345</strain>
    </source>
</reference>
<comment type="function">
    <text evidence="1">Cell wall formation. Adds enolpyruvyl to UDP-N-acetylglucosamine.</text>
</comment>
<comment type="catalytic activity">
    <reaction evidence="1">
        <text>phosphoenolpyruvate + UDP-N-acetyl-alpha-D-glucosamine = UDP-N-acetyl-3-O-(1-carboxyvinyl)-alpha-D-glucosamine + phosphate</text>
        <dbReference type="Rhea" id="RHEA:18681"/>
        <dbReference type="ChEBI" id="CHEBI:43474"/>
        <dbReference type="ChEBI" id="CHEBI:57705"/>
        <dbReference type="ChEBI" id="CHEBI:58702"/>
        <dbReference type="ChEBI" id="CHEBI:68483"/>
        <dbReference type="EC" id="2.5.1.7"/>
    </reaction>
</comment>
<comment type="pathway">
    <text evidence="1">Cell wall biogenesis; peptidoglycan biosynthesis.</text>
</comment>
<comment type="subcellular location">
    <subcellularLocation>
        <location evidence="1">Cytoplasm</location>
    </subcellularLocation>
</comment>
<comment type="similarity">
    <text evidence="1">Belongs to the EPSP synthase family. MurA subfamily.</text>
</comment>
<feature type="chain" id="PRO_1000023011" description="UDP-N-acetylglucosamine 1-carboxyvinyltransferase">
    <location>
        <begin position="1"/>
        <end position="433"/>
    </location>
</feature>
<feature type="active site" description="Proton donor" evidence="1">
    <location>
        <position position="120"/>
    </location>
</feature>
<feature type="binding site" evidence="1">
    <location>
        <begin position="22"/>
        <end position="23"/>
    </location>
    <ligand>
        <name>phosphoenolpyruvate</name>
        <dbReference type="ChEBI" id="CHEBI:58702"/>
    </ligand>
</feature>
<feature type="binding site" evidence="1">
    <location>
        <position position="96"/>
    </location>
    <ligand>
        <name>UDP-N-acetyl-alpha-D-glucosamine</name>
        <dbReference type="ChEBI" id="CHEBI:57705"/>
    </ligand>
</feature>
<feature type="binding site" evidence="1">
    <location>
        <begin position="125"/>
        <end position="129"/>
    </location>
    <ligand>
        <name>UDP-N-acetyl-alpha-D-glucosamine</name>
        <dbReference type="ChEBI" id="CHEBI:57705"/>
    </ligand>
</feature>
<feature type="binding site" evidence="1">
    <location>
        <position position="308"/>
    </location>
    <ligand>
        <name>UDP-N-acetyl-alpha-D-glucosamine</name>
        <dbReference type="ChEBI" id="CHEBI:57705"/>
    </ligand>
</feature>
<feature type="binding site" evidence="1">
    <location>
        <position position="330"/>
    </location>
    <ligand>
        <name>UDP-N-acetyl-alpha-D-glucosamine</name>
        <dbReference type="ChEBI" id="CHEBI:57705"/>
    </ligand>
</feature>
<feature type="modified residue" description="2-(S-cysteinyl)pyruvic acid O-phosphothioketal" evidence="1">
    <location>
        <position position="120"/>
    </location>
</feature>
<accession>Q1IPU1</accession>
<dbReference type="EC" id="2.5.1.7" evidence="1"/>
<dbReference type="EMBL" id="CP000360">
    <property type="protein sequence ID" value="ABF41109.1"/>
    <property type="molecule type" value="Genomic_DNA"/>
</dbReference>
<dbReference type="RefSeq" id="WP_011522910.1">
    <property type="nucleotide sequence ID" value="NC_008009.1"/>
</dbReference>
<dbReference type="SMR" id="Q1IPU1"/>
<dbReference type="STRING" id="204669.Acid345_2108"/>
<dbReference type="EnsemblBacteria" id="ABF41109">
    <property type="protein sequence ID" value="ABF41109"/>
    <property type="gene ID" value="Acid345_2108"/>
</dbReference>
<dbReference type="KEGG" id="aba:Acid345_2108"/>
<dbReference type="eggNOG" id="COG0766">
    <property type="taxonomic scope" value="Bacteria"/>
</dbReference>
<dbReference type="HOGENOM" id="CLU_027387_0_0_0"/>
<dbReference type="OrthoDB" id="9803760at2"/>
<dbReference type="UniPathway" id="UPA00219"/>
<dbReference type="Proteomes" id="UP000002432">
    <property type="component" value="Chromosome"/>
</dbReference>
<dbReference type="GO" id="GO:0005737">
    <property type="term" value="C:cytoplasm"/>
    <property type="evidence" value="ECO:0007669"/>
    <property type="project" value="UniProtKB-SubCell"/>
</dbReference>
<dbReference type="GO" id="GO:0008760">
    <property type="term" value="F:UDP-N-acetylglucosamine 1-carboxyvinyltransferase activity"/>
    <property type="evidence" value="ECO:0007669"/>
    <property type="project" value="UniProtKB-UniRule"/>
</dbReference>
<dbReference type="GO" id="GO:0051301">
    <property type="term" value="P:cell division"/>
    <property type="evidence" value="ECO:0007669"/>
    <property type="project" value="UniProtKB-KW"/>
</dbReference>
<dbReference type="GO" id="GO:0071555">
    <property type="term" value="P:cell wall organization"/>
    <property type="evidence" value="ECO:0007669"/>
    <property type="project" value="UniProtKB-KW"/>
</dbReference>
<dbReference type="GO" id="GO:0009252">
    <property type="term" value="P:peptidoglycan biosynthetic process"/>
    <property type="evidence" value="ECO:0007669"/>
    <property type="project" value="UniProtKB-UniRule"/>
</dbReference>
<dbReference type="GO" id="GO:0008360">
    <property type="term" value="P:regulation of cell shape"/>
    <property type="evidence" value="ECO:0007669"/>
    <property type="project" value="UniProtKB-KW"/>
</dbReference>
<dbReference type="GO" id="GO:0019277">
    <property type="term" value="P:UDP-N-acetylgalactosamine biosynthetic process"/>
    <property type="evidence" value="ECO:0007669"/>
    <property type="project" value="InterPro"/>
</dbReference>
<dbReference type="CDD" id="cd01555">
    <property type="entry name" value="UdpNAET"/>
    <property type="match status" value="1"/>
</dbReference>
<dbReference type="FunFam" id="3.65.10.10:FF:000001">
    <property type="entry name" value="UDP-N-acetylglucosamine 1-carboxyvinyltransferase"/>
    <property type="match status" value="1"/>
</dbReference>
<dbReference type="Gene3D" id="3.65.10.10">
    <property type="entry name" value="Enolpyruvate transferase domain"/>
    <property type="match status" value="2"/>
</dbReference>
<dbReference type="HAMAP" id="MF_00111">
    <property type="entry name" value="MurA"/>
    <property type="match status" value="1"/>
</dbReference>
<dbReference type="InterPro" id="IPR001986">
    <property type="entry name" value="Enolpyruvate_Tfrase_dom"/>
</dbReference>
<dbReference type="InterPro" id="IPR036968">
    <property type="entry name" value="Enolpyruvate_Tfrase_sf"/>
</dbReference>
<dbReference type="InterPro" id="IPR050068">
    <property type="entry name" value="MurA_subfamily"/>
</dbReference>
<dbReference type="InterPro" id="IPR013792">
    <property type="entry name" value="RNA3'P_cycl/enolpyr_Trfase_a/b"/>
</dbReference>
<dbReference type="InterPro" id="IPR005750">
    <property type="entry name" value="UDP_GlcNAc_COvinyl_MurA"/>
</dbReference>
<dbReference type="NCBIfam" id="TIGR01072">
    <property type="entry name" value="murA"/>
    <property type="match status" value="1"/>
</dbReference>
<dbReference type="NCBIfam" id="NF006873">
    <property type="entry name" value="PRK09369.1"/>
    <property type="match status" value="1"/>
</dbReference>
<dbReference type="PANTHER" id="PTHR43783">
    <property type="entry name" value="UDP-N-ACETYLGLUCOSAMINE 1-CARBOXYVINYLTRANSFERASE"/>
    <property type="match status" value="1"/>
</dbReference>
<dbReference type="PANTHER" id="PTHR43783:SF1">
    <property type="entry name" value="UDP-N-ACETYLGLUCOSAMINE 1-CARBOXYVINYLTRANSFERASE"/>
    <property type="match status" value="1"/>
</dbReference>
<dbReference type="Pfam" id="PF00275">
    <property type="entry name" value="EPSP_synthase"/>
    <property type="match status" value="1"/>
</dbReference>
<dbReference type="SUPFAM" id="SSF55205">
    <property type="entry name" value="EPT/RTPC-like"/>
    <property type="match status" value="1"/>
</dbReference>
<proteinExistence type="inferred from homology"/>
<evidence type="ECO:0000255" key="1">
    <source>
        <dbReference type="HAMAP-Rule" id="MF_00111"/>
    </source>
</evidence>
<keyword id="KW-0131">Cell cycle</keyword>
<keyword id="KW-0132">Cell division</keyword>
<keyword id="KW-0133">Cell shape</keyword>
<keyword id="KW-0961">Cell wall biogenesis/degradation</keyword>
<keyword id="KW-0963">Cytoplasm</keyword>
<keyword id="KW-0573">Peptidoglycan synthesis</keyword>
<keyword id="KW-0670">Pyruvate</keyword>
<keyword id="KW-1185">Reference proteome</keyword>
<keyword id="KW-0808">Transferase</keyword>
<sequence length="433" mass="46335">MDKFVIRGGTPLLGNVRVSGAKNAALPAMAAALLTEEPVILENIPQVRDIITERNLLQAMGAEVELGYGRAHHRTTLCCRNLVNPEASYELVKTMRASTLVLGPLVARTGEARVSLPGGCAIGARPIDLHIKGLEKLGAEITQEHGYIKAKATRLKGNHIVFEKITVTGTEDLLMAATLADGETVMENCAREPEVTDLAHLLVKMGAKIEGIGTSTLKITGVEKLHGAKHRIIPDRIEAGTFIIAGALTGGDLMVQNCDPSHLGALLAKLEENGVKIRSNGDSVRVMSEGTLKPGDASTEEYPGFPTDMQAQYMALATQCEGASVVVENIFENRFMHAQELVRMGANIKIEGRRAIVRGKTPLSGAAVLASDLRASASLVLAALVAEGETIIDRVYHIDRGYEHIEEKLRGLGAEIKRIGELFPKKASPVAVS</sequence>